<name>ERA_ESCF3</name>
<dbReference type="EMBL" id="CU928158">
    <property type="protein sequence ID" value="CAQ88056.1"/>
    <property type="molecule type" value="Genomic_DNA"/>
</dbReference>
<dbReference type="RefSeq" id="WP_000063883.1">
    <property type="nucleotide sequence ID" value="NC_011740.1"/>
</dbReference>
<dbReference type="SMR" id="B7LUZ8"/>
<dbReference type="GeneID" id="75058427"/>
<dbReference type="KEGG" id="efe:EFER_0508"/>
<dbReference type="HOGENOM" id="CLU_038009_1_2_6"/>
<dbReference type="OrthoDB" id="9805918at2"/>
<dbReference type="Proteomes" id="UP000000745">
    <property type="component" value="Chromosome"/>
</dbReference>
<dbReference type="GO" id="GO:0005829">
    <property type="term" value="C:cytosol"/>
    <property type="evidence" value="ECO:0007669"/>
    <property type="project" value="TreeGrafter"/>
</dbReference>
<dbReference type="GO" id="GO:0005886">
    <property type="term" value="C:plasma membrane"/>
    <property type="evidence" value="ECO:0007669"/>
    <property type="project" value="UniProtKB-SubCell"/>
</dbReference>
<dbReference type="GO" id="GO:0005525">
    <property type="term" value="F:GTP binding"/>
    <property type="evidence" value="ECO:0007669"/>
    <property type="project" value="UniProtKB-UniRule"/>
</dbReference>
<dbReference type="GO" id="GO:0003924">
    <property type="term" value="F:GTPase activity"/>
    <property type="evidence" value="ECO:0007669"/>
    <property type="project" value="UniProtKB-UniRule"/>
</dbReference>
<dbReference type="GO" id="GO:0043024">
    <property type="term" value="F:ribosomal small subunit binding"/>
    <property type="evidence" value="ECO:0007669"/>
    <property type="project" value="TreeGrafter"/>
</dbReference>
<dbReference type="GO" id="GO:0070181">
    <property type="term" value="F:small ribosomal subunit rRNA binding"/>
    <property type="evidence" value="ECO:0007669"/>
    <property type="project" value="UniProtKB-UniRule"/>
</dbReference>
<dbReference type="GO" id="GO:0000028">
    <property type="term" value="P:ribosomal small subunit assembly"/>
    <property type="evidence" value="ECO:0007669"/>
    <property type="project" value="TreeGrafter"/>
</dbReference>
<dbReference type="CDD" id="cd04163">
    <property type="entry name" value="Era"/>
    <property type="match status" value="1"/>
</dbReference>
<dbReference type="CDD" id="cd22534">
    <property type="entry name" value="KH-II_Era"/>
    <property type="match status" value="1"/>
</dbReference>
<dbReference type="FunFam" id="3.30.300.20:FF:000003">
    <property type="entry name" value="GTPase Era"/>
    <property type="match status" value="1"/>
</dbReference>
<dbReference type="FunFam" id="3.40.50.300:FF:000094">
    <property type="entry name" value="GTPase Era"/>
    <property type="match status" value="1"/>
</dbReference>
<dbReference type="Gene3D" id="3.30.300.20">
    <property type="match status" value="1"/>
</dbReference>
<dbReference type="Gene3D" id="3.40.50.300">
    <property type="entry name" value="P-loop containing nucleotide triphosphate hydrolases"/>
    <property type="match status" value="1"/>
</dbReference>
<dbReference type="HAMAP" id="MF_00367">
    <property type="entry name" value="GTPase_Era"/>
    <property type="match status" value="1"/>
</dbReference>
<dbReference type="InterPro" id="IPR030388">
    <property type="entry name" value="G_ERA_dom"/>
</dbReference>
<dbReference type="InterPro" id="IPR006073">
    <property type="entry name" value="GTP-bd"/>
</dbReference>
<dbReference type="InterPro" id="IPR005662">
    <property type="entry name" value="GTPase_Era-like"/>
</dbReference>
<dbReference type="InterPro" id="IPR015946">
    <property type="entry name" value="KH_dom-like_a/b"/>
</dbReference>
<dbReference type="InterPro" id="IPR004044">
    <property type="entry name" value="KH_dom_type_2"/>
</dbReference>
<dbReference type="InterPro" id="IPR009019">
    <property type="entry name" value="KH_sf_prok-type"/>
</dbReference>
<dbReference type="InterPro" id="IPR027417">
    <property type="entry name" value="P-loop_NTPase"/>
</dbReference>
<dbReference type="InterPro" id="IPR005225">
    <property type="entry name" value="Small_GTP-bd"/>
</dbReference>
<dbReference type="NCBIfam" id="TIGR00436">
    <property type="entry name" value="era"/>
    <property type="match status" value="1"/>
</dbReference>
<dbReference type="NCBIfam" id="NF000908">
    <property type="entry name" value="PRK00089.1"/>
    <property type="match status" value="1"/>
</dbReference>
<dbReference type="NCBIfam" id="TIGR00231">
    <property type="entry name" value="small_GTP"/>
    <property type="match status" value="1"/>
</dbReference>
<dbReference type="PANTHER" id="PTHR42698">
    <property type="entry name" value="GTPASE ERA"/>
    <property type="match status" value="1"/>
</dbReference>
<dbReference type="PANTHER" id="PTHR42698:SF1">
    <property type="entry name" value="GTPASE ERA, MITOCHONDRIAL"/>
    <property type="match status" value="1"/>
</dbReference>
<dbReference type="Pfam" id="PF07650">
    <property type="entry name" value="KH_2"/>
    <property type="match status" value="1"/>
</dbReference>
<dbReference type="Pfam" id="PF01926">
    <property type="entry name" value="MMR_HSR1"/>
    <property type="match status" value="1"/>
</dbReference>
<dbReference type="SUPFAM" id="SSF52540">
    <property type="entry name" value="P-loop containing nucleoside triphosphate hydrolases"/>
    <property type="match status" value="1"/>
</dbReference>
<dbReference type="SUPFAM" id="SSF54814">
    <property type="entry name" value="Prokaryotic type KH domain (KH-domain type II)"/>
    <property type="match status" value="1"/>
</dbReference>
<dbReference type="PROSITE" id="PS51713">
    <property type="entry name" value="G_ERA"/>
    <property type="match status" value="1"/>
</dbReference>
<dbReference type="PROSITE" id="PS50823">
    <property type="entry name" value="KH_TYPE_2"/>
    <property type="match status" value="1"/>
</dbReference>
<proteinExistence type="inferred from homology"/>
<evidence type="ECO:0000255" key="1">
    <source>
        <dbReference type="HAMAP-Rule" id="MF_00367"/>
    </source>
</evidence>
<evidence type="ECO:0000255" key="2">
    <source>
        <dbReference type="PROSITE-ProRule" id="PRU01050"/>
    </source>
</evidence>
<protein>
    <recommendedName>
        <fullName evidence="1">GTPase Era</fullName>
    </recommendedName>
</protein>
<keyword id="KW-0997">Cell inner membrane</keyword>
<keyword id="KW-1003">Cell membrane</keyword>
<keyword id="KW-0963">Cytoplasm</keyword>
<keyword id="KW-0342">GTP-binding</keyword>
<keyword id="KW-0472">Membrane</keyword>
<keyword id="KW-0547">Nucleotide-binding</keyword>
<keyword id="KW-0690">Ribosome biogenesis</keyword>
<keyword id="KW-0694">RNA-binding</keyword>
<keyword id="KW-0699">rRNA-binding</keyword>
<accession>B7LUZ8</accession>
<organism>
    <name type="scientific">Escherichia fergusonii (strain ATCC 35469 / DSM 13698 / CCUG 18766 / IAM 14443 / JCM 21226 / LMG 7866 / NBRC 102419 / NCTC 12128 / CDC 0568-73)</name>
    <dbReference type="NCBI Taxonomy" id="585054"/>
    <lineage>
        <taxon>Bacteria</taxon>
        <taxon>Pseudomonadati</taxon>
        <taxon>Pseudomonadota</taxon>
        <taxon>Gammaproteobacteria</taxon>
        <taxon>Enterobacterales</taxon>
        <taxon>Enterobacteriaceae</taxon>
        <taxon>Escherichia</taxon>
    </lineage>
</organism>
<comment type="function">
    <text evidence="1">An essential GTPase that binds both GDP and GTP, with rapid nucleotide exchange. Plays a role in 16S rRNA processing and 30S ribosomal subunit biogenesis and possibly also in cell cycle regulation and energy metabolism.</text>
</comment>
<comment type="subunit">
    <text evidence="1">Monomer.</text>
</comment>
<comment type="subcellular location">
    <subcellularLocation>
        <location>Cytoplasm</location>
    </subcellularLocation>
    <subcellularLocation>
        <location evidence="1">Cell inner membrane</location>
        <topology evidence="1">Peripheral membrane protein</topology>
    </subcellularLocation>
</comment>
<comment type="similarity">
    <text evidence="1 2">Belongs to the TRAFAC class TrmE-Era-EngA-EngB-Septin-like GTPase superfamily. Era GTPase family.</text>
</comment>
<feature type="chain" id="PRO_1000121328" description="GTPase Era">
    <location>
        <begin position="1"/>
        <end position="301"/>
    </location>
</feature>
<feature type="domain" description="Era-type G" evidence="2">
    <location>
        <begin position="7"/>
        <end position="175"/>
    </location>
</feature>
<feature type="domain" description="KH type-2" evidence="1">
    <location>
        <begin position="206"/>
        <end position="283"/>
    </location>
</feature>
<feature type="region of interest" description="G1" evidence="2">
    <location>
        <begin position="15"/>
        <end position="22"/>
    </location>
</feature>
<feature type="region of interest" description="G2" evidence="2">
    <location>
        <begin position="41"/>
        <end position="45"/>
    </location>
</feature>
<feature type="region of interest" description="G3" evidence="2">
    <location>
        <begin position="62"/>
        <end position="65"/>
    </location>
</feature>
<feature type="region of interest" description="G4" evidence="2">
    <location>
        <begin position="124"/>
        <end position="127"/>
    </location>
</feature>
<feature type="region of interest" description="G5" evidence="2">
    <location>
        <begin position="154"/>
        <end position="156"/>
    </location>
</feature>
<feature type="binding site" evidence="1">
    <location>
        <begin position="15"/>
        <end position="22"/>
    </location>
    <ligand>
        <name>GTP</name>
        <dbReference type="ChEBI" id="CHEBI:37565"/>
    </ligand>
</feature>
<feature type="binding site" evidence="1">
    <location>
        <begin position="62"/>
        <end position="66"/>
    </location>
    <ligand>
        <name>GTP</name>
        <dbReference type="ChEBI" id="CHEBI:37565"/>
    </ligand>
</feature>
<feature type="binding site" evidence="1">
    <location>
        <begin position="124"/>
        <end position="127"/>
    </location>
    <ligand>
        <name>GTP</name>
        <dbReference type="ChEBI" id="CHEBI:37565"/>
    </ligand>
</feature>
<gene>
    <name evidence="1" type="primary">era</name>
    <name type="ordered locus">EFER_0508</name>
</gene>
<sequence>MSNDKSYCGFIAIVGRPNVGKSTLLNKLLGQKISITSRKAQTTRHRIVGIHTEGAYQAIYVDTPGLHMEEKRAINRLMNKAASSSIGDVELVIFVVEGTRWTPDDEMVLNKLRDGKAPVILAVNKVDNVQEKADLLPHLQFLASQMNFLDIVPISAETGLNVDTIAAIVRKHLPEATHHFPEDYITDRSQRFMASEIIREKLMRFLGAELPYSVTVEIERFVSNERGGYDINGLILVEREGQKKMVIGNKGAKIKTIGIEARKDMQEMFEAPVHLELWVKVKSGWADDERALRSLGYVDDL</sequence>
<reference key="1">
    <citation type="journal article" date="2009" name="PLoS Genet.">
        <title>Organised genome dynamics in the Escherichia coli species results in highly diverse adaptive paths.</title>
        <authorList>
            <person name="Touchon M."/>
            <person name="Hoede C."/>
            <person name="Tenaillon O."/>
            <person name="Barbe V."/>
            <person name="Baeriswyl S."/>
            <person name="Bidet P."/>
            <person name="Bingen E."/>
            <person name="Bonacorsi S."/>
            <person name="Bouchier C."/>
            <person name="Bouvet O."/>
            <person name="Calteau A."/>
            <person name="Chiapello H."/>
            <person name="Clermont O."/>
            <person name="Cruveiller S."/>
            <person name="Danchin A."/>
            <person name="Diard M."/>
            <person name="Dossat C."/>
            <person name="Karoui M.E."/>
            <person name="Frapy E."/>
            <person name="Garry L."/>
            <person name="Ghigo J.M."/>
            <person name="Gilles A.M."/>
            <person name="Johnson J."/>
            <person name="Le Bouguenec C."/>
            <person name="Lescat M."/>
            <person name="Mangenot S."/>
            <person name="Martinez-Jehanne V."/>
            <person name="Matic I."/>
            <person name="Nassif X."/>
            <person name="Oztas S."/>
            <person name="Petit M.A."/>
            <person name="Pichon C."/>
            <person name="Rouy Z."/>
            <person name="Ruf C.S."/>
            <person name="Schneider D."/>
            <person name="Tourret J."/>
            <person name="Vacherie B."/>
            <person name="Vallenet D."/>
            <person name="Medigue C."/>
            <person name="Rocha E.P.C."/>
            <person name="Denamur E."/>
        </authorList>
    </citation>
    <scope>NUCLEOTIDE SEQUENCE [LARGE SCALE GENOMIC DNA]</scope>
    <source>
        <strain>ATCC 35469 / DSM 13698 / BCRC 15582 / CCUG 18766 / IAM 14443 / JCM 21226 / LMG 7866 / NBRC 102419 / NCTC 12128 / CDC 0568-73</strain>
    </source>
</reference>